<accession>Q72CS2</accession>
<organism>
    <name type="scientific">Nitratidesulfovibrio vulgaris (strain ATCC 29579 / DSM 644 / CCUG 34227 / NCIMB 8303 / VKM B-1760 / Hildenborough)</name>
    <name type="common">Desulfovibrio vulgaris</name>
    <dbReference type="NCBI Taxonomy" id="882"/>
    <lineage>
        <taxon>Bacteria</taxon>
        <taxon>Pseudomonadati</taxon>
        <taxon>Thermodesulfobacteriota</taxon>
        <taxon>Desulfovibrionia</taxon>
        <taxon>Desulfovibrionales</taxon>
        <taxon>Desulfovibrionaceae</taxon>
        <taxon>Nitratidesulfovibrio</taxon>
    </lineage>
</organism>
<gene>
    <name evidence="1" type="primary">rpmB</name>
    <name type="ordered locus">DVU_1211</name>
</gene>
<sequence length="69" mass="7636">MGKQCEVCGKKPQVGHHVSHSNIKTKRRFEPNLQSVRHQLPSGEVKTVTVCTRCLRSGAVTKPVVRKSA</sequence>
<feature type="chain" id="PRO_0000178467" description="Large ribosomal subunit protein bL28">
    <location>
        <begin position="1"/>
        <end position="69"/>
    </location>
</feature>
<keyword id="KW-1185">Reference proteome</keyword>
<keyword id="KW-0687">Ribonucleoprotein</keyword>
<keyword id="KW-0689">Ribosomal protein</keyword>
<protein>
    <recommendedName>
        <fullName evidence="1">Large ribosomal subunit protein bL28</fullName>
    </recommendedName>
    <alternativeName>
        <fullName evidence="2">50S ribosomal protein L28</fullName>
    </alternativeName>
</protein>
<proteinExistence type="inferred from homology"/>
<evidence type="ECO:0000255" key="1">
    <source>
        <dbReference type="HAMAP-Rule" id="MF_00373"/>
    </source>
</evidence>
<evidence type="ECO:0000305" key="2"/>
<dbReference type="EMBL" id="AE017285">
    <property type="protein sequence ID" value="AAS95689.1"/>
    <property type="molecule type" value="Genomic_DNA"/>
</dbReference>
<dbReference type="RefSeq" id="WP_010938507.1">
    <property type="nucleotide sequence ID" value="NC_002937.3"/>
</dbReference>
<dbReference type="RefSeq" id="YP_010430.1">
    <property type="nucleotide sequence ID" value="NC_002937.3"/>
</dbReference>
<dbReference type="SMR" id="Q72CS2"/>
<dbReference type="STRING" id="882.DVU_1211"/>
<dbReference type="PaxDb" id="882-DVU_1211"/>
<dbReference type="EnsemblBacteria" id="AAS95689">
    <property type="protein sequence ID" value="AAS95689"/>
    <property type="gene ID" value="DVU_1211"/>
</dbReference>
<dbReference type="KEGG" id="dvu:DVU_1211"/>
<dbReference type="PATRIC" id="fig|882.5.peg.1136"/>
<dbReference type="eggNOG" id="COG0227">
    <property type="taxonomic scope" value="Bacteria"/>
</dbReference>
<dbReference type="HOGENOM" id="CLU_064548_7_0_7"/>
<dbReference type="OrthoDB" id="9805609at2"/>
<dbReference type="PhylomeDB" id="Q72CS2"/>
<dbReference type="Proteomes" id="UP000002194">
    <property type="component" value="Chromosome"/>
</dbReference>
<dbReference type="GO" id="GO:1990904">
    <property type="term" value="C:ribonucleoprotein complex"/>
    <property type="evidence" value="ECO:0007669"/>
    <property type="project" value="UniProtKB-KW"/>
</dbReference>
<dbReference type="GO" id="GO:0005840">
    <property type="term" value="C:ribosome"/>
    <property type="evidence" value="ECO:0007669"/>
    <property type="project" value="UniProtKB-KW"/>
</dbReference>
<dbReference type="GO" id="GO:0003735">
    <property type="term" value="F:structural constituent of ribosome"/>
    <property type="evidence" value="ECO:0007669"/>
    <property type="project" value="InterPro"/>
</dbReference>
<dbReference type="GO" id="GO:0006412">
    <property type="term" value="P:translation"/>
    <property type="evidence" value="ECO:0007669"/>
    <property type="project" value="UniProtKB-UniRule"/>
</dbReference>
<dbReference type="Gene3D" id="2.30.170.40">
    <property type="entry name" value="Ribosomal protein L28/L24"/>
    <property type="match status" value="1"/>
</dbReference>
<dbReference type="HAMAP" id="MF_00373">
    <property type="entry name" value="Ribosomal_bL28"/>
    <property type="match status" value="1"/>
</dbReference>
<dbReference type="InterPro" id="IPR050096">
    <property type="entry name" value="Bacterial_rp_bL28"/>
</dbReference>
<dbReference type="InterPro" id="IPR026569">
    <property type="entry name" value="Ribosomal_bL28"/>
</dbReference>
<dbReference type="InterPro" id="IPR034704">
    <property type="entry name" value="Ribosomal_bL28/bL31-like_sf"/>
</dbReference>
<dbReference type="InterPro" id="IPR001383">
    <property type="entry name" value="Ribosomal_bL28_bact-type"/>
</dbReference>
<dbReference type="InterPro" id="IPR037147">
    <property type="entry name" value="Ribosomal_bL28_sf"/>
</dbReference>
<dbReference type="NCBIfam" id="TIGR00009">
    <property type="entry name" value="L28"/>
    <property type="match status" value="1"/>
</dbReference>
<dbReference type="PANTHER" id="PTHR39080">
    <property type="entry name" value="50S RIBOSOMAL PROTEIN L28"/>
    <property type="match status" value="1"/>
</dbReference>
<dbReference type="PANTHER" id="PTHR39080:SF1">
    <property type="entry name" value="LARGE RIBOSOMAL SUBUNIT PROTEIN BL28A"/>
    <property type="match status" value="1"/>
</dbReference>
<dbReference type="Pfam" id="PF00830">
    <property type="entry name" value="Ribosomal_L28"/>
    <property type="match status" value="1"/>
</dbReference>
<dbReference type="SUPFAM" id="SSF143800">
    <property type="entry name" value="L28p-like"/>
    <property type="match status" value="1"/>
</dbReference>
<name>RL28_NITV2</name>
<comment type="similarity">
    <text evidence="1">Belongs to the bacterial ribosomal protein bL28 family.</text>
</comment>
<reference key="1">
    <citation type="journal article" date="2004" name="Nat. Biotechnol.">
        <title>The genome sequence of the anaerobic, sulfate-reducing bacterium Desulfovibrio vulgaris Hildenborough.</title>
        <authorList>
            <person name="Heidelberg J.F."/>
            <person name="Seshadri R."/>
            <person name="Haveman S.A."/>
            <person name="Hemme C.L."/>
            <person name="Paulsen I.T."/>
            <person name="Kolonay J.F."/>
            <person name="Eisen J.A."/>
            <person name="Ward N.L."/>
            <person name="Methe B.A."/>
            <person name="Brinkac L.M."/>
            <person name="Daugherty S.C."/>
            <person name="DeBoy R.T."/>
            <person name="Dodson R.J."/>
            <person name="Durkin A.S."/>
            <person name="Madupu R."/>
            <person name="Nelson W.C."/>
            <person name="Sullivan S.A."/>
            <person name="Fouts D.E."/>
            <person name="Haft D.H."/>
            <person name="Selengut J."/>
            <person name="Peterson J.D."/>
            <person name="Davidsen T.M."/>
            <person name="Zafar N."/>
            <person name="Zhou L."/>
            <person name="Radune D."/>
            <person name="Dimitrov G."/>
            <person name="Hance M."/>
            <person name="Tran K."/>
            <person name="Khouri H.M."/>
            <person name="Gill J."/>
            <person name="Utterback T.R."/>
            <person name="Feldblyum T.V."/>
            <person name="Wall J.D."/>
            <person name="Voordouw G."/>
            <person name="Fraser C.M."/>
        </authorList>
    </citation>
    <scope>NUCLEOTIDE SEQUENCE [LARGE SCALE GENOMIC DNA]</scope>
    <source>
        <strain>ATCC 29579 / DSM 644 / CCUG 34227 / NCIMB 8303 / VKM B-1760 / Hildenborough</strain>
    </source>
</reference>